<reference key="1">
    <citation type="journal article" date="2006" name="Plant Physiol.">
        <title>Rewiring mitogen-activated protein kinase cascade by positive feedback confers potato blight resistance.</title>
        <authorList>
            <person name="Yamamizo C."/>
            <person name="Kuchimura K."/>
            <person name="Kobayashi A."/>
            <person name="Katou S."/>
            <person name="Kawakita K."/>
            <person name="Jones J.D.G."/>
            <person name="Doke N."/>
            <person name="Yoshioka H."/>
        </authorList>
    </citation>
    <scope>NUCLEOTIDE SEQUENCE [MRNA]</scope>
</reference>
<reference key="2">
    <citation type="journal article" date="2007" name="Plant Cell">
        <title>Calcium-dependent protein kinases regulate the production of reactive oxygen species by potato NADPH oxidase.</title>
        <authorList>
            <person name="Kobayashi M."/>
            <person name="Ohura I."/>
            <person name="Kawakita K."/>
            <person name="Yokota N."/>
            <person name="Fujiwara M."/>
            <person name="Shimamoto K."/>
            <person name="Doke N."/>
            <person name="Yoshioka H."/>
        </authorList>
    </citation>
    <scope>PHOSPHORYLATION</scope>
    <scope>TISSUE SPECIFICITY</scope>
</reference>
<proteinExistence type="evidence at protein level"/>
<comment type="function">
    <text>Calcium-dependent NADPH oxidase that generates superoxide. May be responsible for the oxidative burst in response to pathogen attack in the leaves.</text>
</comment>
<comment type="subunit">
    <text evidence="1">Monomer and homodimer.</text>
</comment>
<comment type="subcellular location">
    <subcellularLocation>
        <location evidence="7">Membrane</location>
        <topology evidence="7">Multi-pass membrane protein</topology>
    </subcellularLocation>
</comment>
<comment type="tissue specificity">
    <text evidence="6">Expressed in leaves.</text>
</comment>
<comment type="PTM">
    <text evidence="6">Phosphorylated by CPK.</text>
</comment>
<comment type="similarity">
    <text evidence="7">Belongs to the RBOH (TC 5.B.1.3) family.</text>
</comment>
<accession>Q2HXK9</accession>
<feature type="chain" id="PRO_0000313766" description="Respiratory burst oxidase homolog protein D">
    <location>
        <begin position="1"/>
        <end position="858"/>
    </location>
</feature>
<feature type="topological domain" description="Cytoplasmic" evidence="2">
    <location>
        <begin position="1"/>
        <end position="318"/>
    </location>
</feature>
<feature type="transmembrane region" description="Helical" evidence="2">
    <location>
        <begin position="319"/>
        <end position="339"/>
    </location>
</feature>
<feature type="topological domain" description="Extracellular" evidence="2">
    <location>
        <begin position="340"/>
        <end position="351"/>
    </location>
</feature>
<feature type="transmembrane region" description="Helical" evidence="2">
    <location>
        <begin position="352"/>
        <end position="372"/>
    </location>
</feature>
<feature type="topological domain" description="Cytoplasmic" evidence="2">
    <location>
        <begin position="373"/>
        <end position="397"/>
    </location>
</feature>
<feature type="transmembrane region" description="Helical" evidence="2">
    <location>
        <begin position="398"/>
        <end position="418"/>
    </location>
</feature>
<feature type="topological domain" description="Extracellular" evidence="2">
    <location>
        <begin position="419"/>
        <end position="454"/>
    </location>
</feature>
<feature type="transmembrane region" description="Helical" evidence="2">
    <location>
        <begin position="455"/>
        <end position="475"/>
    </location>
</feature>
<feature type="topological domain" description="Cytoplasmic" evidence="2">
    <location>
        <begin position="476"/>
        <end position="497"/>
    </location>
</feature>
<feature type="transmembrane region" description="Helical" evidence="2">
    <location>
        <begin position="498"/>
        <end position="518"/>
    </location>
</feature>
<feature type="topological domain" description="Extracellular" evidence="2">
    <location>
        <begin position="519"/>
        <end position="675"/>
    </location>
</feature>
<feature type="transmembrane region" description="Helical" evidence="2">
    <location>
        <begin position="676"/>
        <end position="696"/>
    </location>
</feature>
<feature type="topological domain" description="Cytoplasmic" evidence="2">
    <location>
        <begin position="697"/>
        <end position="858"/>
    </location>
</feature>
<feature type="domain" description="EF-hand 1" evidence="3">
    <location>
        <begin position="194"/>
        <end position="229"/>
    </location>
</feature>
<feature type="domain" description="EF-hand 2" evidence="3">
    <location>
        <begin position="238"/>
        <end position="273"/>
    </location>
</feature>
<feature type="domain" description="Ferric oxidoreductase">
    <location>
        <begin position="357"/>
        <end position="514"/>
    </location>
</feature>
<feature type="domain" description="FAD-binding FR-type" evidence="4">
    <location>
        <begin position="548"/>
        <end position="670"/>
    </location>
</feature>
<feature type="region of interest" description="Disordered" evidence="5">
    <location>
        <begin position="1"/>
        <end position="27"/>
    </location>
</feature>
<feature type="region of interest" description="EF-hand-like 1" evidence="1">
    <location>
        <begin position="134"/>
        <end position="144"/>
    </location>
</feature>
<feature type="region of interest" description="EF-hand-like 2" evidence="1">
    <location>
        <begin position="171"/>
        <end position="182"/>
    </location>
</feature>
<feature type="compositionally biased region" description="Basic and acidic residues" evidence="5">
    <location>
        <begin position="1"/>
        <end position="13"/>
    </location>
</feature>
<feature type="binding site" evidence="3">
    <location>
        <position position="207"/>
    </location>
    <ligand>
        <name>Ca(2+)</name>
        <dbReference type="ChEBI" id="CHEBI:29108"/>
    </ligand>
</feature>
<feature type="binding site" evidence="3">
    <location>
        <position position="209"/>
    </location>
    <ligand>
        <name>Ca(2+)</name>
        <dbReference type="ChEBI" id="CHEBI:29108"/>
    </ligand>
</feature>
<feature type="binding site" evidence="3">
    <location>
        <position position="211"/>
    </location>
    <ligand>
        <name>Ca(2+)</name>
        <dbReference type="ChEBI" id="CHEBI:29108"/>
    </ligand>
</feature>
<feature type="binding site" evidence="3">
    <location>
        <position position="213"/>
    </location>
    <ligand>
        <name>Ca(2+)</name>
        <dbReference type="ChEBI" id="CHEBI:29108"/>
    </ligand>
</feature>
<feature type="binding site" evidence="3">
    <location>
        <position position="218"/>
    </location>
    <ligand>
        <name>Ca(2+)</name>
        <dbReference type="ChEBI" id="CHEBI:29108"/>
    </ligand>
</feature>
<sequence>MQNPEDHHSDRELSSPSNTTKSNDDKNVEITLDIRDDTMAGQSVKNATKTKAEEAELEALGKNLQKKCSFGATIVRNVSMRMRLPSFKRQPHPPQTFDRSSTAAQNALKGFKFISKTDGGSGWDTVQQRFDELTATSDSLLPRAKFGECIGMNRESEGFALELFNALARRRNITSGCISKEQLKEFWDQIANQSFDSRLRTFFDMVDKDADGRLTEEEVREIICLSASANKLSNIQKQAAEYAALIMEELDRDQKGYIMLENLEMLLLEAPIQPDGEKGLNRNLSHMLSMKLKPTLETNPIKRWYNNLKYFLLDNWRRVWVLLLWIGVMAGLFAYKYVQYKNKAAFNVMGHCVCVAKGAAEVLKLNMALILLPVCRNTITWLRNKTKLGGAVPFDDNINFHKVVAGAIAVGVGIHVLAHMTCDFPRLLNASPEKYKPMEPYFGDQPRNYWHFVKGVEGVSGIIMVVLMSIAFTLASQRFRRNKIRLPRPLNKLTGFNAFWYSHHLFVIVYSLLIVHGIELYLTKEWYKKTTWMYLAIPIILYSGERLLRAFRSSVKDVKILKVAMYTGNVLTLQMSKPQGFNYKSGQYMFVNCAAVSPFEWHPFSITSAPGDEYLSVHIRIVGDWTTKLRDVFSEPSPTGRSGLVADYLQDKINYPKVLIDGPYGAPAQDYKEYEVLLLVGLGIGATPMISIVKDIVNNMKEEKYDHDLEKKTVSGSGRSNFKRVYFYWVTREQGSFDWFKGLMNELAVMDCDGIIEMHNYCTSVYEEGDARSALIAMLQSINHAKNGVDIVSGTRVKTHFARPNWRNVYKRIALNHTDARVGVFYCGAPALTKVLGQLALDFSHKTSTKFDFHKENF</sequence>
<evidence type="ECO:0000250" key="1"/>
<evidence type="ECO:0000255" key="2"/>
<evidence type="ECO:0000255" key="3">
    <source>
        <dbReference type="PROSITE-ProRule" id="PRU00448"/>
    </source>
</evidence>
<evidence type="ECO:0000255" key="4">
    <source>
        <dbReference type="PROSITE-ProRule" id="PRU00716"/>
    </source>
</evidence>
<evidence type="ECO:0000256" key="5">
    <source>
        <dbReference type="SAM" id="MobiDB-lite"/>
    </source>
</evidence>
<evidence type="ECO:0000269" key="6">
    <source>
    </source>
</evidence>
<evidence type="ECO:0000305" key="7"/>
<organism>
    <name type="scientific">Solanum tuberosum</name>
    <name type="common">Potato</name>
    <dbReference type="NCBI Taxonomy" id="4113"/>
    <lineage>
        <taxon>Eukaryota</taxon>
        <taxon>Viridiplantae</taxon>
        <taxon>Streptophyta</taxon>
        <taxon>Embryophyta</taxon>
        <taxon>Tracheophyta</taxon>
        <taxon>Spermatophyta</taxon>
        <taxon>Magnoliopsida</taxon>
        <taxon>eudicotyledons</taxon>
        <taxon>Gunneridae</taxon>
        <taxon>Pentapetalae</taxon>
        <taxon>asterids</taxon>
        <taxon>lamiids</taxon>
        <taxon>Solanales</taxon>
        <taxon>Solanaceae</taxon>
        <taxon>Solanoideae</taxon>
        <taxon>Solaneae</taxon>
        <taxon>Solanum</taxon>
    </lineage>
</organism>
<name>RBOHD_SOLTU</name>
<dbReference type="EC" id="1.11.1.-"/>
<dbReference type="EC" id="1.6.3.-"/>
<dbReference type="EMBL" id="AB198717">
    <property type="protein sequence ID" value="BAE79345.2"/>
    <property type="molecule type" value="mRNA"/>
</dbReference>
<dbReference type="RefSeq" id="NP_001305507.1">
    <property type="nucleotide sequence ID" value="NM_001318578.1"/>
</dbReference>
<dbReference type="SMR" id="Q2HXK9"/>
<dbReference type="STRING" id="4113.Q2HXK9"/>
<dbReference type="PeroxiBase" id="4548">
    <property type="entry name" value="StRboh04"/>
</dbReference>
<dbReference type="GeneID" id="102586476"/>
<dbReference type="KEGG" id="sot:102586476"/>
<dbReference type="InParanoid" id="Q2HXK9"/>
<dbReference type="OrthoDB" id="167398at2759"/>
<dbReference type="Proteomes" id="UP000011115">
    <property type="component" value="Unassembled WGS sequence"/>
</dbReference>
<dbReference type="ExpressionAtlas" id="Q2HXK9">
    <property type="expression patterns" value="baseline and differential"/>
</dbReference>
<dbReference type="GO" id="GO:0005886">
    <property type="term" value="C:plasma membrane"/>
    <property type="evidence" value="ECO:0000318"/>
    <property type="project" value="GO_Central"/>
</dbReference>
<dbReference type="GO" id="GO:0005509">
    <property type="term" value="F:calcium ion binding"/>
    <property type="evidence" value="ECO:0007669"/>
    <property type="project" value="InterPro"/>
</dbReference>
<dbReference type="GO" id="GO:0016174">
    <property type="term" value="F:NAD(P)H oxidase H2O2-forming activity"/>
    <property type="evidence" value="ECO:0000318"/>
    <property type="project" value="GO_Central"/>
</dbReference>
<dbReference type="GO" id="GO:0004601">
    <property type="term" value="F:peroxidase activity"/>
    <property type="evidence" value="ECO:0007669"/>
    <property type="project" value="UniProtKB-KW"/>
</dbReference>
<dbReference type="CDD" id="cd00051">
    <property type="entry name" value="EFh"/>
    <property type="match status" value="1"/>
</dbReference>
<dbReference type="CDD" id="cd06186">
    <property type="entry name" value="NOX_Duox_like_FAD_NADP"/>
    <property type="match status" value="1"/>
</dbReference>
<dbReference type="FunFam" id="1.10.238.10:FF:000049">
    <property type="entry name" value="Respiratory burst oxidase homolog A"/>
    <property type="match status" value="1"/>
</dbReference>
<dbReference type="FunFam" id="2.40.30.10:FF:000019">
    <property type="entry name" value="Respiratory burst oxidase homolog A"/>
    <property type="match status" value="1"/>
</dbReference>
<dbReference type="FunFam" id="3.40.50.80:FF:000007">
    <property type="entry name" value="Respiratory burst oxidase protein A"/>
    <property type="match status" value="1"/>
</dbReference>
<dbReference type="Gene3D" id="1.10.238.10">
    <property type="entry name" value="EF-hand"/>
    <property type="match status" value="1"/>
</dbReference>
<dbReference type="Gene3D" id="3.40.50.80">
    <property type="entry name" value="Nucleotide-binding domain of ferredoxin-NADP reductase (FNR) module"/>
    <property type="match status" value="1"/>
</dbReference>
<dbReference type="Gene3D" id="2.40.30.10">
    <property type="entry name" value="Translation factors"/>
    <property type="match status" value="1"/>
</dbReference>
<dbReference type="InterPro" id="IPR000778">
    <property type="entry name" value="Cyt_b245_heavy_chain"/>
</dbReference>
<dbReference type="InterPro" id="IPR011992">
    <property type="entry name" value="EF-hand-dom_pair"/>
</dbReference>
<dbReference type="InterPro" id="IPR018247">
    <property type="entry name" value="EF_Hand_1_Ca_BS"/>
</dbReference>
<dbReference type="InterPro" id="IPR002048">
    <property type="entry name" value="EF_hand_dom"/>
</dbReference>
<dbReference type="InterPro" id="IPR013112">
    <property type="entry name" value="FAD-bd_8"/>
</dbReference>
<dbReference type="InterPro" id="IPR017927">
    <property type="entry name" value="FAD-bd_FR_type"/>
</dbReference>
<dbReference type="InterPro" id="IPR013130">
    <property type="entry name" value="Fe3_Rdtase_TM_dom"/>
</dbReference>
<dbReference type="InterPro" id="IPR013121">
    <property type="entry name" value="Fe_red_NAD-bd_6"/>
</dbReference>
<dbReference type="InterPro" id="IPR039261">
    <property type="entry name" value="FNR_nucleotide-bd"/>
</dbReference>
<dbReference type="InterPro" id="IPR013623">
    <property type="entry name" value="NADPH_Ox"/>
</dbReference>
<dbReference type="InterPro" id="IPR050369">
    <property type="entry name" value="RBOH/FRE"/>
</dbReference>
<dbReference type="InterPro" id="IPR017938">
    <property type="entry name" value="Riboflavin_synthase-like_b-brl"/>
</dbReference>
<dbReference type="PANTHER" id="PTHR11972">
    <property type="entry name" value="NADPH OXIDASE"/>
    <property type="match status" value="1"/>
</dbReference>
<dbReference type="PANTHER" id="PTHR11972:SF152">
    <property type="entry name" value="RESPIRATORY BURST OXIDASE HOMOLOG PROTEIN C"/>
    <property type="match status" value="1"/>
</dbReference>
<dbReference type="Pfam" id="PF08022">
    <property type="entry name" value="FAD_binding_8"/>
    <property type="match status" value="1"/>
</dbReference>
<dbReference type="Pfam" id="PF01794">
    <property type="entry name" value="Ferric_reduct"/>
    <property type="match status" value="1"/>
</dbReference>
<dbReference type="Pfam" id="PF08030">
    <property type="entry name" value="NAD_binding_6"/>
    <property type="match status" value="1"/>
</dbReference>
<dbReference type="Pfam" id="PF08414">
    <property type="entry name" value="NADPH_Ox"/>
    <property type="match status" value="1"/>
</dbReference>
<dbReference type="PRINTS" id="PR00466">
    <property type="entry name" value="GP91PHOX"/>
</dbReference>
<dbReference type="SFLD" id="SFLDG01168">
    <property type="entry name" value="Ferric_reductase_subgroup_(FRE"/>
    <property type="match status" value="1"/>
</dbReference>
<dbReference type="SFLD" id="SFLDG01169">
    <property type="entry name" value="NADPH_oxidase_subgroup_(NOX)"/>
    <property type="match status" value="1"/>
</dbReference>
<dbReference type="SUPFAM" id="SSF47473">
    <property type="entry name" value="EF-hand"/>
    <property type="match status" value="1"/>
</dbReference>
<dbReference type="SUPFAM" id="SSF52343">
    <property type="entry name" value="Ferredoxin reductase-like, C-terminal NADP-linked domain"/>
    <property type="match status" value="1"/>
</dbReference>
<dbReference type="SUPFAM" id="SSF63380">
    <property type="entry name" value="Riboflavin synthase domain-like"/>
    <property type="match status" value="1"/>
</dbReference>
<dbReference type="PROSITE" id="PS00018">
    <property type="entry name" value="EF_HAND_1"/>
    <property type="match status" value="1"/>
</dbReference>
<dbReference type="PROSITE" id="PS50222">
    <property type="entry name" value="EF_HAND_2"/>
    <property type="match status" value="2"/>
</dbReference>
<dbReference type="PROSITE" id="PS51384">
    <property type="entry name" value="FAD_FR"/>
    <property type="match status" value="1"/>
</dbReference>
<keyword id="KW-0106">Calcium</keyword>
<keyword id="KW-0274">FAD</keyword>
<keyword id="KW-0285">Flavoprotein</keyword>
<keyword id="KW-0472">Membrane</keyword>
<keyword id="KW-0479">Metal-binding</keyword>
<keyword id="KW-0521">NADP</keyword>
<keyword id="KW-0560">Oxidoreductase</keyword>
<keyword id="KW-0575">Peroxidase</keyword>
<keyword id="KW-0597">Phosphoprotein</keyword>
<keyword id="KW-1185">Reference proteome</keyword>
<keyword id="KW-0677">Repeat</keyword>
<keyword id="KW-0812">Transmembrane</keyword>
<keyword id="KW-1133">Transmembrane helix</keyword>
<gene>
    <name type="primary">RBOHD</name>
</gene>
<protein>
    <recommendedName>
        <fullName>Respiratory burst oxidase homolog protein D</fullName>
        <ecNumber>1.11.1.-</ecNumber>
        <ecNumber>1.6.3.-</ecNumber>
    </recommendedName>
    <alternativeName>
        <fullName>NADPH oxidase RBOHD</fullName>
    </alternativeName>
    <alternativeName>
        <fullName>StRBOHD</fullName>
    </alternativeName>
</protein>